<name>FRMA_PHODP</name>
<gene>
    <name type="primary">frmA</name>
</gene>
<feature type="chain" id="PRO_0000160777" description="S-(hydroxymethyl)glutathione dehydrogenase">
    <location>
        <begin position="1"/>
        <end position="369"/>
    </location>
</feature>
<feature type="binding site" evidence="1">
    <location>
        <position position="40"/>
    </location>
    <ligand>
        <name>Zn(2+)</name>
        <dbReference type="ChEBI" id="CHEBI:29105"/>
        <label>1</label>
        <note>catalytic</note>
    </ligand>
</feature>
<feature type="binding site" evidence="1">
    <location>
        <position position="62"/>
    </location>
    <ligand>
        <name>Zn(2+)</name>
        <dbReference type="ChEBI" id="CHEBI:29105"/>
        <label>1</label>
        <note>catalytic</note>
    </ligand>
</feature>
<feature type="binding site" evidence="1">
    <location>
        <position position="92"/>
    </location>
    <ligand>
        <name>Zn(2+)</name>
        <dbReference type="ChEBI" id="CHEBI:29105"/>
        <label>2</label>
    </ligand>
</feature>
<feature type="binding site" evidence="1">
    <location>
        <position position="95"/>
    </location>
    <ligand>
        <name>Zn(2+)</name>
        <dbReference type="ChEBI" id="CHEBI:29105"/>
        <label>2</label>
    </ligand>
</feature>
<feature type="binding site" evidence="1">
    <location>
        <position position="98"/>
    </location>
    <ligand>
        <name>Zn(2+)</name>
        <dbReference type="ChEBI" id="CHEBI:29105"/>
        <label>2</label>
    </ligand>
</feature>
<feature type="binding site" evidence="1">
    <location>
        <position position="106"/>
    </location>
    <ligand>
        <name>Zn(2+)</name>
        <dbReference type="ChEBI" id="CHEBI:29105"/>
        <label>2</label>
    </ligand>
</feature>
<feature type="binding site" evidence="1">
    <location>
        <position position="169"/>
    </location>
    <ligand>
        <name>Zn(2+)</name>
        <dbReference type="ChEBI" id="CHEBI:29105"/>
        <label>1</label>
        <note>catalytic</note>
    </ligand>
</feature>
<evidence type="ECO:0000250" key="1">
    <source>
        <dbReference type="UniProtKB" id="P11766"/>
    </source>
</evidence>
<evidence type="ECO:0000250" key="2">
    <source>
        <dbReference type="UniProtKB" id="P25437"/>
    </source>
</evidence>
<evidence type="ECO:0000303" key="3">
    <source>
    </source>
</evidence>
<evidence type="ECO:0000305" key="4"/>
<dbReference type="EC" id="1.1.1.284"/>
<dbReference type="EC" id="1.1.1.1"/>
<dbReference type="EC" id="1.1.1.-"/>
<dbReference type="EMBL" id="D16172">
    <property type="protein sequence ID" value="BAA03719.1"/>
    <property type="status" value="ALT_FRAME"/>
    <property type="molecule type" value="Genomic_DNA"/>
</dbReference>
<dbReference type="RefSeq" id="YP_003023972.1">
    <property type="nucleotide sequence ID" value="NC_012919.1"/>
</dbReference>
<dbReference type="RefSeq" id="YP_908417.1">
    <property type="nucleotide sequence ID" value="NC_008612.1"/>
</dbReference>
<dbReference type="RefSeq" id="YP_908601.1">
    <property type="nucleotide sequence ID" value="NC_008613.1"/>
</dbReference>
<dbReference type="SMR" id="P39450"/>
<dbReference type="GO" id="GO:0005829">
    <property type="term" value="C:cytosol"/>
    <property type="evidence" value="ECO:0007669"/>
    <property type="project" value="TreeGrafter"/>
</dbReference>
<dbReference type="GO" id="GO:0004022">
    <property type="term" value="F:alcohol dehydrogenase (NAD+) activity"/>
    <property type="evidence" value="ECO:0007669"/>
    <property type="project" value="UniProtKB-EC"/>
</dbReference>
<dbReference type="GO" id="GO:0106322">
    <property type="term" value="F:S-(hydroxymethyl)glutathione dehydrogenase (NAD+) activity"/>
    <property type="evidence" value="ECO:0007669"/>
    <property type="project" value="RHEA"/>
</dbReference>
<dbReference type="GO" id="GO:0106321">
    <property type="term" value="F:S-(hydroxymethyl)glutathione dehydrogenase (NADP+) activity"/>
    <property type="evidence" value="ECO:0007669"/>
    <property type="project" value="RHEA"/>
</dbReference>
<dbReference type="GO" id="GO:0080007">
    <property type="term" value="F:S-nitrosoglutathione reductase (NADH) activity"/>
    <property type="evidence" value="ECO:0007669"/>
    <property type="project" value="RHEA"/>
</dbReference>
<dbReference type="GO" id="GO:0008270">
    <property type="term" value="F:zinc ion binding"/>
    <property type="evidence" value="ECO:0007669"/>
    <property type="project" value="InterPro"/>
</dbReference>
<dbReference type="GO" id="GO:0046294">
    <property type="term" value="P:formaldehyde catabolic process"/>
    <property type="evidence" value="ECO:0007669"/>
    <property type="project" value="InterPro"/>
</dbReference>
<dbReference type="CDD" id="cd08300">
    <property type="entry name" value="alcohol_DH_class_III"/>
    <property type="match status" value="1"/>
</dbReference>
<dbReference type="FunFam" id="3.40.50.720:FF:000003">
    <property type="entry name" value="S-(hydroxymethyl)glutathione dehydrogenase"/>
    <property type="match status" value="1"/>
</dbReference>
<dbReference type="FunFam" id="3.90.180.10:FF:000001">
    <property type="entry name" value="S-(hydroxymethyl)glutathione dehydrogenase"/>
    <property type="match status" value="1"/>
</dbReference>
<dbReference type="Gene3D" id="3.90.180.10">
    <property type="entry name" value="Medium-chain alcohol dehydrogenases, catalytic domain"/>
    <property type="match status" value="1"/>
</dbReference>
<dbReference type="Gene3D" id="3.40.50.720">
    <property type="entry name" value="NAD(P)-binding Rossmann-like Domain"/>
    <property type="match status" value="1"/>
</dbReference>
<dbReference type="InterPro" id="IPR013149">
    <property type="entry name" value="ADH-like_C"/>
</dbReference>
<dbReference type="InterPro" id="IPR013154">
    <property type="entry name" value="ADH-like_N"/>
</dbReference>
<dbReference type="InterPro" id="IPR014183">
    <property type="entry name" value="ADH_3"/>
</dbReference>
<dbReference type="InterPro" id="IPR002328">
    <property type="entry name" value="ADH_Zn_CS"/>
</dbReference>
<dbReference type="InterPro" id="IPR011032">
    <property type="entry name" value="GroES-like_sf"/>
</dbReference>
<dbReference type="InterPro" id="IPR036291">
    <property type="entry name" value="NAD(P)-bd_dom_sf"/>
</dbReference>
<dbReference type="InterPro" id="IPR020843">
    <property type="entry name" value="PKS_ER"/>
</dbReference>
<dbReference type="NCBIfam" id="TIGR02818">
    <property type="entry name" value="adh_III_F_hyde"/>
    <property type="match status" value="1"/>
</dbReference>
<dbReference type="PANTHER" id="PTHR43880">
    <property type="entry name" value="ALCOHOL DEHYDROGENASE"/>
    <property type="match status" value="1"/>
</dbReference>
<dbReference type="PANTHER" id="PTHR43880:SF12">
    <property type="entry name" value="ALCOHOL DEHYDROGENASE CLASS-3"/>
    <property type="match status" value="1"/>
</dbReference>
<dbReference type="Pfam" id="PF08240">
    <property type="entry name" value="ADH_N"/>
    <property type="match status" value="1"/>
</dbReference>
<dbReference type="Pfam" id="PF00107">
    <property type="entry name" value="ADH_zinc_N"/>
    <property type="match status" value="1"/>
</dbReference>
<dbReference type="SMART" id="SM00829">
    <property type="entry name" value="PKS_ER"/>
    <property type="match status" value="1"/>
</dbReference>
<dbReference type="SUPFAM" id="SSF50129">
    <property type="entry name" value="GroES-like"/>
    <property type="match status" value="2"/>
</dbReference>
<dbReference type="SUPFAM" id="SSF51735">
    <property type="entry name" value="NAD(P)-binding Rossmann-fold domains"/>
    <property type="match status" value="1"/>
</dbReference>
<dbReference type="PROSITE" id="PS00059">
    <property type="entry name" value="ADH_ZINC"/>
    <property type="match status" value="1"/>
</dbReference>
<keyword id="KW-0963">Cytoplasm</keyword>
<keyword id="KW-0479">Metal-binding</keyword>
<keyword id="KW-0520">NAD</keyword>
<keyword id="KW-0560">Oxidoreductase</keyword>
<keyword id="KW-0614">Plasmid</keyword>
<keyword id="KW-0862">Zinc</keyword>
<accession>P39450</accession>
<organism>
    <name type="scientific">Photobacterium damsela subsp. piscicida</name>
    <name type="common">Pasteurella piscicida</name>
    <dbReference type="NCBI Taxonomy" id="38294"/>
    <lineage>
        <taxon>Bacteria</taxon>
        <taxon>Pseudomonadati</taxon>
        <taxon>Pseudomonadota</taxon>
        <taxon>Gammaproteobacteria</taxon>
        <taxon>Vibrionales</taxon>
        <taxon>Vibrionaceae</taxon>
        <taxon>Photobacterium</taxon>
    </lineage>
</organism>
<proteinExistence type="inferred from homology"/>
<reference key="1">
    <citation type="journal article" date="1994" name="Microbiol. Immunol.">
        <title>The transposon-like structure of IS26-tetracycline, and kanamycin resistance determinant derived from transferable R plasmid of fish pathogen, Pasteurella piscicida.</title>
        <authorList>
            <person name="Kim E.H."/>
            <person name="Aoki T."/>
        </authorList>
    </citation>
    <scope>NUCLEOTIDE SEQUENCE [GENOMIC DNA]</scope>
</reference>
<reference key="2">
    <citation type="unpublished observations" date="1994-11">
        <authorList>
            <person name="Rudd K.E."/>
            <person name="Bairoch A."/>
        </authorList>
    </citation>
    <scope>IDENTIFICATION</scope>
    <scope>CONCEPTUAL TRANSLATION</scope>
</reference>
<comment type="function">
    <text evidence="2">Has high formaldehyde dehydrogenase activity in the presence of glutathione and catalyzes the oxidation of normal alcohols in a reaction that is not GSH-dependent. In addition, hemithiolacetals other than those formed from GSH, including omega-thiol fatty acids, also are substrates. Also acts as a S-nitroso-glutathione reductase by catalyzing the NADH-dependent reduction of S-nitrosoglutathione.</text>
</comment>
<comment type="catalytic activity">
    <reaction evidence="2">
        <text>S-(hydroxymethyl)glutathione + NADP(+) = S-formylglutathione + NADPH + H(+)</text>
        <dbReference type="Rhea" id="RHEA:19981"/>
        <dbReference type="ChEBI" id="CHEBI:15378"/>
        <dbReference type="ChEBI" id="CHEBI:57688"/>
        <dbReference type="ChEBI" id="CHEBI:57783"/>
        <dbReference type="ChEBI" id="CHEBI:58349"/>
        <dbReference type="ChEBI" id="CHEBI:58758"/>
        <dbReference type="EC" id="1.1.1.284"/>
    </reaction>
</comment>
<comment type="catalytic activity">
    <reaction evidence="2">
        <text>S-(hydroxymethyl)glutathione + NAD(+) = S-formylglutathione + NADH + H(+)</text>
        <dbReference type="Rhea" id="RHEA:19985"/>
        <dbReference type="ChEBI" id="CHEBI:15378"/>
        <dbReference type="ChEBI" id="CHEBI:57540"/>
        <dbReference type="ChEBI" id="CHEBI:57688"/>
        <dbReference type="ChEBI" id="CHEBI:57945"/>
        <dbReference type="ChEBI" id="CHEBI:58758"/>
        <dbReference type="EC" id="1.1.1.284"/>
    </reaction>
</comment>
<comment type="catalytic activity">
    <reaction evidence="2">
        <text>a primary alcohol + NAD(+) = an aldehyde + NADH + H(+)</text>
        <dbReference type="Rhea" id="RHEA:10736"/>
        <dbReference type="ChEBI" id="CHEBI:15378"/>
        <dbReference type="ChEBI" id="CHEBI:15734"/>
        <dbReference type="ChEBI" id="CHEBI:17478"/>
        <dbReference type="ChEBI" id="CHEBI:57540"/>
        <dbReference type="ChEBI" id="CHEBI:57945"/>
        <dbReference type="EC" id="1.1.1.1"/>
    </reaction>
</comment>
<comment type="catalytic activity">
    <reaction evidence="2">
        <text>a secondary alcohol + NAD(+) = a ketone + NADH + H(+)</text>
        <dbReference type="Rhea" id="RHEA:10740"/>
        <dbReference type="ChEBI" id="CHEBI:15378"/>
        <dbReference type="ChEBI" id="CHEBI:17087"/>
        <dbReference type="ChEBI" id="CHEBI:35681"/>
        <dbReference type="ChEBI" id="CHEBI:57540"/>
        <dbReference type="ChEBI" id="CHEBI:57945"/>
        <dbReference type="EC" id="1.1.1.1"/>
    </reaction>
</comment>
<comment type="catalytic activity">
    <reaction evidence="2">
        <text>S-nitrosoglutathione + NADH + H(+) = S-(hydroxysulfenamide)glutathione + NAD(+)</text>
        <dbReference type="Rhea" id="RHEA:78371"/>
        <dbReference type="ChEBI" id="CHEBI:15378"/>
        <dbReference type="ChEBI" id="CHEBI:57540"/>
        <dbReference type="ChEBI" id="CHEBI:57945"/>
        <dbReference type="ChEBI" id="CHEBI:145544"/>
        <dbReference type="ChEBI" id="CHEBI:229723"/>
    </reaction>
    <physiologicalReaction direction="left-to-right" evidence="2">
        <dbReference type="Rhea" id="RHEA:78372"/>
    </physiologicalReaction>
</comment>
<comment type="cofactor">
    <cofactor evidence="1">
        <name>Zn(2+)</name>
        <dbReference type="ChEBI" id="CHEBI:29105"/>
    </cofactor>
    <text evidence="1">Binds 2 Zn(2+) ions per subunit.</text>
</comment>
<comment type="subunit">
    <text evidence="2">Homodimer.</text>
</comment>
<comment type="subcellular location">
    <subcellularLocation>
        <location evidence="2">Cytoplasm</location>
    </subcellularLocation>
</comment>
<comment type="similarity">
    <text evidence="4">Belongs to the zinc-containing alcohol dehydrogenase family. Class-III subfamily.</text>
</comment>
<comment type="sequence caution" evidence="4">
    <conflict type="frameshift">
        <sequence resource="EMBL-CDS" id="BAA03719"/>
    </conflict>
</comment>
<protein>
    <recommendedName>
        <fullName>S-(hydroxymethyl)glutathione dehydrogenase</fullName>
        <ecNumber>1.1.1.284</ecNumber>
    </recommendedName>
    <alternativeName>
        <fullName>Alcohol dehydrogenase class-3</fullName>
        <ecNumber>1.1.1.1</ecNumber>
    </alternativeName>
    <alternativeName>
        <fullName>Alcohol dehydrogenase class-III</fullName>
    </alternativeName>
    <alternativeName>
        <fullName>Glutathione-dependent formaldehyde dehydrogenase</fullName>
        <shortName>FALDH</shortName>
        <shortName>FDH</shortName>
        <shortName>GSH-FDH</shortName>
        <ecNumber>1.1.1.-</ecNumber>
    </alternativeName>
</protein>
<geneLocation type="plasmid" evidence="3">
    <name>R</name>
</geneLocation>
<sequence>MKSRAAVAFGPGLPLEIVEIDVAPPKKGEVLVKISHTGVCHTDAYTLSGDDPEGLFPVVLGHEGAGVVVEVGEGVTSVKPGDHVIPLYTAECGECDFCTSGKTNLCVAVRETQGKGVMPDATSRFFVNGQPLYHYMGCSTFSEYTVVAEVSLAKINPQANAEQVCLLGCGVTTGIGAVHNTAKVQEGDSVAVFGLGGIGLAVVQGARQAKAGRIFAIDTNPSKFELAKQFGATDCINPNDYDKPVQQVLVEMTKWGVDHTFECIGNVNVMRSALESAHRGWGQSVIIGVAGAGKEISTRPFQLVTGRVWKGTAFGGVKGRTQLPGMVEDAMSGKIELAPFVTHTMELDKINEAFDLMHDGKSIRTVIHY</sequence>